<feature type="chain" id="PRO_0000146741" description="Occludin">
    <location>
        <begin position="1"/>
        <end position="489"/>
    </location>
</feature>
<feature type="topological domain" description="Cytoplasmic" evidence="4">
    <location>
        <begin position="1"/>
        <end position="51"/>
    </location>
</feature>
<feature type="transmembrane region" description="Helical" evidence="4">
    <location>
        <begin position="52"/>
        <end position="74"/>
    </location>
</feature>
<feature type="topological domain" description="Extracellular" evidence="4">
    <location>
        <begin position="75"/>
        <end position="112"/>
    </location>
</feature>
<feature type="transmembrane region" description="Helical" evidence="4">
    <location>
        <begin position="113"/>
        <end position="137"/>
    </location>
</feature>
<feature type="topological domain" description="Cytoplasmic" evidence="4">
    <location>
        <begin position="138"/>
        <end position="147"/>
    </location>
</feature>
<feature type="transmembrane region" description="Helical" evidence="4">
    <location>
        <begin position="148"/>
        <end position="172"/>
    </location>
</feature>
<feature type="topological domain" description="Extracellular" evidence="4">
    <location>
        <begin position="173"/>
        <end position="222"/>
    </location>
</feature>
<feature type="transmembrane region" description="Helical" evidence="4">
    <location>
        <begin position="223"/>
        <end position="244"/>
    </location>
</feature>
<feature type="topological domain" description="Cytoplasmic" evidence="4">
    <location>
        <begin position="245"/>
        <end position="489"/>
    </location>
</feature>
<feature type="domain" description="MARVEL" evidence="6">
    <location>
        <begin position="45"/>
        <end position="248"/>
    </location>
</feature>
<feature type="domain" description="OCEL" evidence="7">
    <location>
        <begin position="381"/>
        <end position="489"/>
    </location>
</feature>
<feature type="region of interest" description="Disordered" evidence="8">
    <location>
        <begin position="308"/>
        <end position="382"/>
    </location>
</feature>
<feature type="coiled-coil region" evidence="4">
    <location>
        <begin position="407"/>
        <end position="434"/>
    </location>
</feature>
<feature type="compositionally biased region" description="Pro residues" evidence="8">
    <location>
        <begin position="322"/>
        <end position="332"/>
    </location>
</feature>
<feature type="compositionally biased region" description="Basic residues" evidence="8">
    <location>
        <begin position="345"/>
        <end position="354"/>
    </location>
</feature>
<feature type="compositionally biased region" description="Polar residues" evidence="8">
    <location>
        <begin position="365"/>
        <end position="377"/>
    </location>
</feature>
<feature type="modified residue" description="Phosphoserine" evidence="3">
    <location>
        <position position="280"/>
    </location>
</feature>
<feature type="modified residue" description="Phosphothreonine" evidence="3">
    <location>
        <position position="285"/>
    </location>
</feature>
<feature type="modified residue" description="Phosphoserine" evidence="2">
    <location>
        <position position="300"/>
    </location>
</feature>
<feature type="modified residue" description="Phosphotyrosine" evidence="2">
    <location>
        <position position="364"/>
    </location>
</feature>
<feature type="modified residue" description="Phosphotyrosine" evidence="2">
    <location>
        <position position="368"/>
    </location>
</feature>
<feature type="modified residue" description="Phosphothreonine; by PKC/PRKCH" evidence="2">
    <location>
        <position position="369"/>
    </location>
</feature>
<feature type="modified residue" description="Phosphothreonine; by PKC/PRKCH" evidence="2">
    <location>
        <position position="370"/>
    </location>
</feature>
<feature type="modified residue" description="Phosphoserine" evidence="2">
    <location>
        <position position="374"/>
    </location>
</feature>
<feature type="modified residue" description="Phosphoserine" evidence="2">
    <location>
        <position position="457"/>
    </location>
</feature>
<feature type="disulfide bond" evidence="5">
    <location>
        <begin position="196"/>
        <end position="216"/>
    </location>
</feature>
<protein>
    <recommendedName>
        <fullName>Occludin</fullName>
    </recommendedName>
</protein>
<name>OCLN_POTTR</name>
<sequence>MMYEKRSYTGYGHPSSHYDYPPPSGPPGSFYLADVPPQHFYQWRSPPGIVRILQGSVVILCLVIFACVASTLAWEYYGSGGLLGYGGGLGSYYNGYYGGYNGYYYGGLTNPRAANGFMIAMAVLCFLVTLGLVIAGLSKASGARSRRFYLLVAVLSGLLAFVMLIASIVYVVGVNPRAGLGASSGSLYYNQMLMLCNQMMSPVAGGIMNQYLYHYCMVDPQEAVAIVCGFLTVILLCVICYFAQKTRHKIWKYGKPNIFWDKPLATAEGPNVEEWVKNVSGDVGTQDETATLAYSEKPISPLTSAFLPAQENGYGHSTPSSPSVPPPEGPSPPEEKDKGSVSRPPARRGHRQRPRPTGLEESQYETDYTTAAESSGEQNRDDWASLYPPIISDAIRQTYKAEFNNDLQRYKALCAEMDDIGTQLRQLSHELDCLPEGSLRYQGVAEEYNRLKDLKRSPEYQSKKLETQSLRDKLCHIKRMVGGYDQSRS</sequence>
<comment type="function">
    <text>May play a role in the formation and regulation of the tight junction (TJ) paracellular permeability barrier.</text>
</comment>
<comment type="subunit">
    <text evidence="2 3">Interacts with TJP1/ZO1. Interacts with VAPA. Interacts with CLDN1, CLDN6, CLDN9, CLDN11, CLDN12 and CLDN17. Interacts with PLSCR1. Interacts with LSR, ILDR1 and ILDR2. Interacts with TJP2/ZO2 (By similarity).</text>
</comment>
<comment type="subcellular location">
    <subcellularLocation>
        <location evidence="2">Cell membrane</location>
        <topology evidence="4">Multi-pass membrane protein</topology>
    </subcellularLocation>
    <subcellularLocation>
        <location evidence="2">Cell junction</location>
        <location evidence="2">Tight junction</location>
    </subcellularLocation>
</comment>
<comment type="tissue specificity">
    <text>Localized at tight junctions of both epithelial and endothelial cells.</text>
</comment>
<comment type="domain">
    <text evidence="1">The C-terminal is cytoplasmic and is important for interaction with ZO-1. Necessary for the tight junction localization. Involved in the regulation of the permeability barrier function of the tight junction (By similarity).</text>
</comment>
<comment type="PTM">
    <text evidence="1">Dephosphorylated by PTPRJ.</text>
</comment>
<comment type="similarity">
    <text evidence="9">Belongs to the ELL/occludin family.</text>
</comment>
<proteinExistence type="evidence at transcript level"/>
<organism>
    <name type="scientific">Potorous tridactylus</name>
    <name type="common">Potoroo</name>
    <dbReference type="NCBI Taxonomy" id="9310"/>
    <lineage>
        <taxon>Eukaryota</taxon>
        <taxon>Metazoa</taxon>
        <taxon>Chordata</taxon>
        <taxon>Craniata</taxon>
        <taxon>Vertebrata</taxon>
        <taxon>Euteleostomi</taxon>
        <taxon>Mammalia</taxon>
        <taxon>Metatheria</taxon>
        <taxon>Diprotodontia</taxon>
        <taxon>Potoroidae</taxon>
        <taxon>Potorous</taxon>
    </lineage>
</organism>
<reference key="1">
    <citation type="journal article" date="1996" name="J. Cell Biol.">
        <title>Interspecies diversity of the occludin sequence: cDNA cloning of human, mouse, dog, and rat-kangaroo homologues.</title>
        <authorList>
            <person name="Ando-Akatsuka Y."/>
            <person name="Saitou M."/>
            <person name="Hirase T."/>
            <person name="Kishi M."/>
            <person name="Sakakibara A."/>
            <person name="Itoh M."/>
            <person name="Yonemura S."/>
            <person name="Furuse M."/>
            <person name="Tsukita S."/>
        </authorList>
    </citation>
    <scope>NUCLEOTIDE SEQUENCE [MRNA]</scope>
    <source>
        <tissue>Kidney</tissue>
    </source>
</reference>
<gene>
    <name type="primary">OCLN</name>
</gene>
<keyword id="KW-0965">Cell junction</keyword>
<keyword id="KW-1003">Cell membrane</keyword>
<keyword id="KW-0175">Coiled coil</keyword>
<keyword id="KW-1015">Disulfide bond</keyword>
<keyword id="KW-0472">Membrane</keyword>
<keyword id="KW-0597">Phosphoprotein</keyword>
<keyword id="KW-0796">Tight junction</keyword>
<keyword id="KW-0812">Transmembrane</keyword>
<keyword id="KW-1133">Transmembrane helix</keyword>
<evidence type="ECO:0000250" key="1"/>
<evidence type="ECO:0000250" key="2">
    <source>
        <dbReference type="UniProtKB" id="Q16625"/>
    </source>
</evidence>
<evidence type="ECO:0000250" key="3">
    <source>
        <dbReference type="UniProtKB" id="Q61146"/>
    </source>
</evidence>
<evidence type="ECO:0000255" key="4"/>
<evidence type="ECO:0000255" key="5">
    <source>
        <dbReference type="PROSITE-ProRule" id="PRU00114"/>
    </source>
</evidence>
<evidence type="ECO:0000255" key="6">
    <source>
        <dbReference type="PROSITE-ProRule" id="PRU00581"/>
    </source>
</evidence>
<evidence type="ECO:0000255" key="7">
    <source>
        <dbReference type="PROSITE-ProRule" id="PRU01324"/>
    </source>
</evidence>
<evidence type="ECO:0000256" key="8">
    <source>
        <dbReference type="SAM" id="MobiDB-lite"/>
    </source>
</evidence>
<evidence type="ECO:0000305" key="9"/>
<dbReference type="EMBL" id="U49183">
    <property type="protein sequence ID" value="AAC48565.1"/>
    <property type="molecule type" value="mRNA"/>
</dbReference>
<dbReference type="SMR" id="Q28793"/>
<dbReference type="GO" id="GO:0005923">
    <property type="term" value="C:bicellular tight junction"/>
    <property type="evidence" value="ECO:0007669"/>
    <property type="project" value="UniProtKB-SubCell"/>
</dbReference>
<dbReference type="GO" id="GO:0005886">
    <property type="term" value="C:plasma membrane"/>
    <property type="evidence" value="ECO:0007669"/>
    <property type="project" value="UniProtKB-SubCell"/>
</dbReference>
<dbReference type="GO" id="GO:0008023">
    <property type="term" value="C:transcription elongation factor complex"/>
    <property type="evidence" value="ECO:0007669"/>
    <property type="project" value="TreeGrafter"/>
</dbReference>
<dbReference type="GO" id="GO:0000987">
    <property type="term" value="F:cis-regulatory region sequence-specific DNA binding"/>
    <property type="evidence" value="ECO:0007669"/>
    <property type="project" value="TreeGrafter"/>
</dbReference>
<dbReference type="GO" id="GO:0070830">
    <property type="term" value="P:bicellular tight junction assembly"/>
    <property type="evidence" value="ECO:0007669"/>
    <property type="project" value="InterPro"/>
</dbReference>
<dbReference type="GO" id="GO:0032968">
    <property type="term" value="P:positive regulation of transcription elongation by RNA polymerase II"/>
    <property type="evidence" value="ECO:0007669"/>
    <property type="project" value="TreeGrafter"/>
</dbReference>
<dbReference type="GO" id="GO:0042795">
    <property type="term" value="P:snRNA transcription by RNA polymerase II"/>
    <property type="evidence" value="ECO:0007669"/>
    <property type="project" value="TreeGrafter"/>
</dbReference>
<dbReference type="Gene3D" id="6.10.140.340">
    <property type="match status" value="1"/>
</dbReference>
<dbReference type="InterPro" id="IPR031176">
    <property type="entry name" value="ELL/occludin"/>
</dbReference>
<dbReference type="InterPro" id="IPR008253">
    <property type="entry name" value="Marvel"/>
</dbReference>
<dbReference type="InterPro" id="IPR002958">
    <property type="entry name" value="Occludin"/>
</dbReference>
<dbReference type="InterPro" id="IPR010844">
    <property type="entry name" value="Occludin_ELL"/>
</dbReference>
<dbReference type="PANTHER" id="PTHR23288:SF6">
    <property type="entry name" value="OCCLUDIN"/>
    <property type="match status" value="1"/>
</dbReference>
<dbReference type="PANTHER" id="PTHR23288">
    <property type="entry name" value="OCCLUDIN AND RNA POLYMERASE II ELONGATION FACTOR ELL"/>
    <property type="match status" value="1"/>
</dbReference>
<dbReference type="Pfam" id="PF01284">
    <property type="entry name" value="MARVEL"/>
    <property type="match status" value="1"/>
</dbReference>
<dbReference type="Pfam" id="PF07303">
    <property type="entry name" value="Occludin_ELL"/>
    <property type="match status" value="1"/>
</dbReference>
<dbReference type="PIRSF" id="PIRSF005993">
    <property type="entry name" value="Occludin"/>
    <property type="match status" value="1"/>
</dbReference>
<dbReference type="PRINTS" id="PR01258">
    <property type="entry name" value="OCCLUDIN"/>
</dbReference>
<dbReference type="SUPFAM" id="SSF144292">
    <property type="entry name" value="occludin/ELL-like"/>
    <property type="match status" value="1"/>
</dbReference>
<dbReference type="PROSITE" id="PS51225">
    <property type="entry name" value="MARVEL"/>
    <property type="match status" value="1"/>
</dbReference>
<dbReference type="PROSITE" id="PS51980">
    <property type="entry name" value="OCEL"/>
    <property type="match status" value="1"/>
</dbReference>
<accession>Q28793</accession>